<dbReference type="EMBL" id="AE017355">
    <property type="protein sequence ID" value="AAT63725.1"/>
    <property type="molecule type" value="Genomic_DNA"/>
</dbReference>
<dbReference type="RefSeq" id="WP_000544275.1">
    <property type="nucleotide sequence ID" value="NC_005957.1"/>
</dbReference>
<dbReference type="RefSeq" id="YP_038571.1">
    <property type="nucleotide sequence ID" value="NC_005957.1"/>
</dbReference>
<dbReference type="SMR" id="Q6HD05"/>
<dbReference type="KEGG" id="btk:BT9727_4255"/>
<dbReference type="PATRIC" id="fig|281309.8.peg.4535"/>
<dbReference type="HOGENOM" id="CLU_014841_3_2_9"/>
<dbReference type="Proteomes" id="UP000001301">
    <property type="component" value="Chromosome"/>
</dbReference>
<dbReference type="GO" id="GO:0005737">
    <property type="term" value="C:cytoplasm"/>
    <property type="evidence" value="ECO:0007669"/>
    <property type="project" value="UniProtKB-SubCell"/>
</dbReference>
<dbReference type="GO" id="GO:0009380">
    <property type="term" value="C:excinuclease repair complex"/>
    <property type="evidence" value="ECO:0007669"/>
    <property type="project" value="InterPro"/>
</dbReference>
<dbReference type="GO" id="GO:0003677">
    <property type="term" value="F:DNA binding"/>
    <property type="evidence" value="ECO:0007669"/>
    <property type="project" value="UniProtKB-UniRule"/>
</dbReference>
<dbReference type="GO" id="GO:0009381">
    <property type="term" value="F:excinuclease ABC activity"/>
    <property type="evidence" value="ECO:0007669"/>
    <property type="project" value="UniProtKB-UniRule"/>
</dbReference>
<dbReference type="GO" id="GO:0006289">
    <property type="term" value="P:nucleotide-excision repair"/>
    <property type="evidence" value="ECO:0007669"/>
    <property type="project" value="UniProtKB-UniRule"/>
</dbReference>
<dbReference type="GO" id="GO:0009432">
    <property type="term" value="P:SOS response"/>
    <property type="evidence" value="ECO:0007669"/>
    <property type="project" value="UniProtKB-UniRule"/>
</dbReference>
<dbReference type="CDD" id="cd10434">
    <property type="entry name" value="GIY-YIG_UvrC_Cho"/>
    <property type="match status" value="1"/>
</dbReference>
<dbReference type="FunFam" id="1.10.150.20:FF:000005">
    <property type="entry name" value="UvrABC system protein C"/>
    <property type="match status" value="1"/>
</dbReference>
<dbReference type="FunFam" id="3.30.420.340:FF:000002">
    <property type="entry name" value="UvrABC system protein C"/>
    <property type="match status" value="1"/>
</dbReference>
<dbReference type="FunFam" id="3.40.1440.10:FF:000001">
    <property type="entry name" value="UvrABC system protein C"/>
    <property type="match status" value="1"/>
</dbReference>
<dbReference type="FunFam" id="4.10.860.10:FF:000002">
    <property type="entry name" value="UvrABC system protein C"/>
    <property type="match status" value="1"/>
</dbReference>
<dbReference type="Gene3D" id="1.10.150.20">
    <property type="entry name" value="5' to 3' exonuclease, C-terminal subdomain"/>
    <property type="match status" value="1"/>
</dbReference>
<dbReference type="Gene3D" id="3.40.1440.10">
    <property type="entry name" value="GIY-YIG endonuclease"/>
    <property type="match status" value="1"/>
</dbReference>
<dbReference type="Gene3D" id="4.10.860.10">
    <property type="entry name" value="UVR domain"/>
    <property type="match status" value="1"/>
</dbReference>
<dbReference type="Gene3D" id="3.30.420.340">
    <property type="entry name" value="UvrC, RNAse H endonuclease domain"/>
    <property type="match status" value="1"/>
</dbReference>
<dbReference type="HAMAP" id="MF_00203">
    <property type="entry name" value="UvrC"/>
    <property type="match status" value="1"/>
</dbReference>
<dbReference type="InterPro" id="IPR000305">
    <property type="entry name" value="GIY-YIG_endonuc"/>
</dbReference>
<dbReference type="InterPro" id="IPR035901">
    <property type="entry name" value="GIY-YIG_endonuc_sf"/>
</dbReference>
<dbReference type="InterPro" id="IPR047296">
    <property type="entry name" value="GIY-YIG_UvrC_Cho"/>
</dbReference>
<dbReference type="InterPro" id="IPR010994">
    <property type="entry name" value="RuvA_2-like"/>
</dbReference>
<dbReference type="InterPro" id="IPR001943">
    <property type="entry name" value="UVR_dom"/>
</dbReference>
<dbReference type="InterPro" id="IPR036876">
    <property type="entry name" value="UVR_dom_sf"/>
</dbReference>
<dbReference type="InterPro" id="IPR050066">
    <property type="entry name" value="UvrABC_protein_C"/>
</dbReference>
<dbReference type="InterPro" id="IPR004791">
    <property type="entry name" value="UvrC"/>
</dbReference>
<dbReference type="InterPro" id="IPR001162">
    <property type="entry name" value="UvrC_RNase_H_dom"/>
</dbReference>
<dbReference type="InterPro" id="IPR038476">
    <property type="entry name" value="UvrC_RNase_H_dom_sf"/>
</dbReference>
<dbReference type="NCBIfam" id="NF001824">
    <property type="entry name" value="PRK00558.1-5"/>
    <property type="match status" value="1"/>
</dbReference>
<dbReference type="NCBIfam" id="TIGR00194">
    <property type="entry name" value="uvrC"/>
    <property type="match status" value="1"/>
</dbReference>
<dbReference type="PANTHER" id="PTHR30562:SF1">
    <property type="entry name" value="UVRABC SYSTEM PROTEIN C"/>
    <property type="match status" value="1"/>
</dbReference>
<dbReference type="PANTHER" id="PTHR30562">
    <property type="entry name" value="UVRC/OXIDOREDUCTASE"/>
    <property type="match status" value="1"/>
</dbReference>
<dbReference type="Pfam" id="PF01541">
    <property type="entry name" value="GIY-YIG"/>
    <property type="match status" value="1"/>
</dbReference>
<dbReference type="Pfam" id="PF02151">
    <property type="entry name" value="UVR"/>
    <property type="match status" value="1"/>
</dbReference>
<dbReference type="Pfam" id="PF22920">
    <property type="entry name" value="UvrC_RNaseH"/>
    <property type="match status" value="1"/>
</dbReference>
<dbReference type="Pfam" id="PF08459">
    <property type="entry name" value="UvrC_RNaseH_dom"/>
    <property type="match status" value="1"/>
</dbReference>
<dbReference type="SMART" id="SM00465">
    <property type="entry name" value="GIYc"/>
    <property type="match status" value="1"/>
</dbReference>
<dbReference type="SUPFAM" id="SSF46600">
    <property type="entry name" value="C-terminal UvrC-binding domain of UvrB"/>
    <property type="match status" value="1"/>
</dbReference>
<dbReference type="SUPFAM" id="SSF82771">
    <property type="entry name" value="GIY-YIG endonuclease"/>
    <property type="match status" value="1"/>
</dbReference>
<dbReference type="SUPFAM" id="SSF47781">
    <property type="entry name" value="RuvA domain 2-like"/>
    <property type="match status" value="1"/>
</dbReference>
<dbReference type="PROSITE" id="PS50164">
    <property type="entry name" value="GIY_YIG"/>
    <property type="match status" value="1"/>
</dbReference>
<dbReference type="PROSITE" id="PS50151">
    <property type="entry name" value="UVR"/>
    <property type="match status" value="1"/>
</dbReference>
<dbReference type="PROSITE" id="PS50165">
    <property type="entry name" value="UVRC"/>
    <property type="match status" value="1"/>
</dbReference>
<keyword id="KW-0963">Cytoplasm</keyword>
<keyword id="KW-0227">DNA damage</keyword>
<keyword id="KW-0228">DNA excision</keyword>
<keyword id="KW-0234">DNA repair</keyword>
<keyword id="KW-0267">Excision nuclease</keyword>
<keyword id="KW-0742">SOS response</keyword>
<evidence type="ECO:0000255" key="1">
    <source>
        <dbReference type="HAMAP-Rule" id="MF_00203"/>
    </source>
</evidence>
<proteinExistence type="inferred from homology"/>
<accession>Q6HD05</accession>
<comment type="function">
    <text evidence="1">The UvrABC repair system catalyzes the recognition and processing of DNA lesions. UvrC both incises the 5' and 3' sides of the lesion. The N-terminal half is responsible for the 3' incision and the C-terminal half is responsible for the 5' incision.</text>
</comment>
<comment type="subunit">
    <text evidence="1">Interacts with UvrB in an incision complex.</text>
</comment>
<comment type="subcellular location">
    <subcellularLocation>
        <location evidence="1">Cytoplasm</location>
    </subcellularLocation>
</comment>
<comment type="similarity">
    <text evidence="1">Belongs to the UvrC family.</text>
</comment>
<reference key="1">
    <citation type="journal article" date="2006" name="J. Bacteriol.">
        <title>Pathogenomic sequence analysis of Bacillus cereus and Bacillus thuringiensis isolates closely related to Bacillus anthracis.</title>
        <authorList>
            <person name="Han C.S."/>
            <person name="Xie G."/>
            <person name="Challacombe J.F."/>
            <person name="Altherr M.R."/>
            <person name="Bhotika S.S."/>
            <person name="Bruce D."/>
            <person name="Campbell C.S."/>
            <person name="Campbell M.L."/>
            <person name="Chen J."/>
            <person name="Chertkov O."/>
            <person name="Cleland C."/>
            <person name="Dimitrijevic M."/>
            <person name="Doggett N.A."/>
            <person name="Fawcett J.J."/>
            <person name="Glavina T."/>
            <person name="Goodwin L.A."/>
            <person name="Hill K.K."/>
            <person name="Hitchcock P."/>
            <person name="Jackson P.J."/>
            <person name="Keim P."/>
            <person name="Kewalramani A.R."/>
            <person name="Longmire J."/>
            <person name="Lucas S."/>
            <person name="Malfatti S."/>
            <person name="McMurry K."/>
            <person name="Meincke L.J."/>
            <person name="Misra M."/>
            <person name="Moseman B.L."/>
            <person name="Mundt M."/>
            <person name="Munk A.C."/>
            <person name="Okinaka R.T."/>
            <person name="Parson-Quintana B."/>
            <person name="Reilly L.P."/>
            <person name="Richardson P."/>
            <person name="Robinson D.L."/>
            <person name="Rubin E."/>
            <person name="Saunders E."/>
            <person name="Tapia R."/>
            <person name="Tesmer J.G."/>
            <person name="Thayer N."/>
            <person name="Thompson L.S."/>
            <person name="Tice H."/>
            <person name="Ticknor L.O."/>
            <person name="Wills P.L."/>
            <person name="Brettin T.S."/>
            <person name="Gilna P."/>
        </authorList>
    </citation>
    <scope>NUCLEOTIDE SEQUENCE [LARGE SCALE GENOMIC DNA]</scope>
    <source>
        <strain>97-27</strain>
    </source>
</reference>
<organism>
    <name type="scientific">Bacillus thuringiensis subsp. konkukian (strain 97-27)</name>
    <dbReference type="NCBI Taxonomy" id="281309"/>
    <lineage>
        <taxon>Bacteria</taxon>
        <taxon>Bacillati</taxon>
        <taxon>Bacillota</taxon>
        <taxon>Bacilli</taxon>
        <taxon>Bacillales</taxon>
        <taxon>Bacillaceae</taxon>
        <taxon>Bacillus</taxon>
        <taxon>Bacillus cereus group</taxon>
    </lineage>
</organism>
<protein>
    <recommendedName>
        <fullName evidence="1">UvrABC system protein C</fullName>
        <shortName evidence="1">Protein UvrC</shortName>
    </recommendedName>
    <alternativeName>
        <fullName evidence="1">Excinuclease ABC subunit C</fullName>
    </alternativeName>
</protein>
<sequence length="594" mass="68370">MHEHLKEKLAILPDQPGCYLMKDKQGTVIYVGKAKVLKNRVRSYFTGSHDGKTLRLVGEIVDFEYIVTSSNLEALILELNLIKKHDPKYNIQLKDDKTYPFIKITAEKQPRLLITRNVKKDKGKYFGPYPNAQSAHETKKLLDRMYPLRKCSNMPDKVCLYYHMGQCLAPCVKEVTEEQNKEIVDEIIKFLNGGHKEVRSELETKMYEASEKLEFERAKELRDQIAHIDAIMEKQKMIMSDLVDRDVFGYAVDKGWMCVQVFFVRKGKLIERDVSMFPIYDEPEEGFLTFIGQFYENSSHFKPKEIVVPGSIDSELVERFLEVEATQPKRGKKKDLVELANKNAKIALEEKFYLIERDEERTIKAVENLGKQLGIETPYRIEAFDNSNIQGTNPVSAMIAFIDGKPAKKEYRKYKIKTVQGPDDYESMREVVRRRYTRALKEGLPLPDLIIIDGGKGHLAAASDVLENELGLYIPMAGLVKDDKHKTSHLIIGDPPEPVMLERNSQEFYLLQRVQDEVHRFAITFHRQLHGKSVIQSALDDIPGIGDKRKKVLLKHFGSLKKMKEASIEEFVEAGMPKNVAETIYTYLTDKKTL</sequence>
<gene>
    <name evidence="1" type="primary">uvrC</name>
    <name type="ordered locus">BT9727_4255</name>
</gene>
<name>UVRC_BACHK</name>
<feature type="chain" id="PRO_0000227399" description="UvrABC system protein C">
    <location>
        <begin position="1"/>
        <end position="594"/>
    </location>
</feature>
<feature type="domain" description="GIY-YIG" evidence="1">
    <location>
        <begin position="14"/>
        <end position="91"/>
    </location>
</feature>
<feature type="domain" description="UVR" evidence="1">
    <location>
        <begin position="196"/>
        <end position="231"/>
    </location>
</feature>